<proteinExistence type="evidence at protein level"/>
<name>ISK1L_RAT</name>
<keyword id="KW-0903">Direct protein sequencing</keyword>
<keyword id="KW-1015">Disulfide bond</keyword>
<keyword id="KW-0646">Protease inhibitor</keyword>
<keyword id="KW-1185">Reference proteome</keyword>
<keyword id="KW-0964">Secreted</keyword>
<keyword id="KW-0722">Serine protease inhibitor</keyword>
<keyword id="KW-0732">Signal</keyword>
<accession>P09656</accession>
<evidence type="ECO:0000250" key="1">
    <source>
        <dbReference type="UniProtKB" id="P09036"/>
    </source>
</evidence>
<evidence type="ECO:0000255" key="2">
    <source>
        <dbReference type="PROSITE-ProRule" id="PRU00798"/>
    </source>
</evidence>
<evidence type="ECO:0000269" key="3">
    <source>
    </source>
</evidence>
<evidence type="ECO:0000269" key="4">
    <source>
    </source>
</evidence>
<evidence type="ECO:0000269" key="5">
    <source>
    </source>
</evidence>
<evidence type="ECO:0000312" key="6">
    <source>
        <dbReference type="RGD" id="708468"/>
    </source>
</evidence>
<protein>
    <recommendedName>
        <fullName evidence="6">Serine protease inhibitor Kazal-type 1-like</fullName>
    </recommendedName>
    <alternativeName>
        <fullName>Calcium transport inhibitor</fullName>
    </alternativeName>
    <alternativeName>
        <fullName>Caltrin</fullName>
    </alternativeName>
    <alternativeName>
        <fullName>Pancreatic secretory trypsin inhibitor II</fullName>
        <shortName>PSTI-II</shortName>
    </alternativeName>
</protein>
<sequence>MKVAIIFLLSALALLNLAGNTTAKVIGKKANCPNTLVGCPRDYDPVCGTDGKTYANECILCFENRKFGTSIRIQRRGLC</sequence>
<reference key="1">
    <citation type="journal article" date="1989" name="Biochem. Biophys. Res. Commun.">
        <title>On the cDNA's for two types of rat pancreatic secretory trypsin inhibitor.</title>
        <authorList>
            <person name="Horii A."/>
            <person name="Tomita N."/>
            <person name="Yokouchi H."/>
            <person name="Doi S."/>
            <person name="Uda K."/>
            <person name="Ogawa M."/>
            <person name="Mori T."/>
            <person name="Matsubara K."/>
        </authorList>
    </citation>
    <scope>NUCLEOTIDE SEQUENCE [MRNA]</scope>
    <source>
        <tissue>Pancreas</tissue>
    </source>
</reference>
<reference key="2">
    <citation type="journal article" date="1992" name="Biochim. Biophys. Acta">
        <title>Molecular cloning and characterization of genes encoding rat pancreatic cholecystokinin (CCK)-releasing peptide (monitor peptide) and pancreatic secretory trypsin inhibitor (PSTI).</title>
        <authorList>
            <person name="Tsuzuki S."/>
            <person name="Miura Y."/>
            <person name="Fushiki T."/>
            <person name="Oomori T."/>
            <person name="Satoh T."/>
            <person name="Natori Y."/>
            <person name="Sugimoto E."/>
        </authorList>
    </citation>
    <scope>NUCLEOTIDE SEQUENCE [GENOMIC DNA]</scope>
</reference>
<reference key="3">
    <citation type="journal article" date="1988" name="Biol. Chem. Hoppe-Seyler">
        <title>Purification, characterization and amino-acid sequencing of two pancreatic secretory trypsin inhibitors in rat pancreatic juice.</title>
        <authorList>
            <person name="Uda K."/>
            <person name="Ogawa M."/>
            <person name="Shibita T."/>
            <person name="Murata A."/>
            <person name="Mori T."/>
            <person name="Kikuchi N."/>
            <person name="Yoshida N."/>
            <person name="Tsunasawa S."/>
            <person name="Sakiyama F."/>
        </authorList>
    </citation>
    <scope>PROTEIN SEQUENCE OF 24-79</scope>
    <scope>FUNCTION</scope>
    <source>
        <strain>Wistar</strain>
        <tissue>Pancreas</tissue>
    </source>
</reference>
<reference key="4">
    <citation type="journal article" date="1990" name="Eur. J. Biochem.">
        <title>A low-molecular-mass Kazal-type protease inhibitor isolated from rat hepatocytes is identical to rat pancreatic secretory trypsin inhibitor II. Purification and amino acid sequence.</title>
        <authorList>
            <person name="Kido H."/>
            <person name="Yokogoshi Y."/>
            <person name="Katunuma N."/>
        </authorList>
    </citation>
    <scope>PROTEIN SEQUENCE OF 24-79</scope>
    <source>
        <tissue>Hepatocyte</tissue>
    </source>
</reference>
<reference key="5">
    <citation type="journal article" date="1992" name="J. Biol. Chem.">
        <title>Purification, structure, and characterization of caltrin proteins from seminal vesicle of the rat and mouse.</title>
        <authorList>
            <person name="Coronel C.E."/>
            <person name="Winnica D.E."/>
            <person name="Novella M.L."/>
            <person name="Lardy H.A."/>
        </authorList>
    </citation>
    <scope>PROTEIN SEQUENCE OF 24-79</scope>
    <scope>FUNCTION</scope>
    <scope>TISSUE SPECIFICITY</scope>
    <source>
        <tissue>Seminal vesicle</tissue>
    </source>
</reference>
<organism>
    <name type="scientific">Rattus norvegicus</name>
    <name type="common">Rat</name>
    <dbReference type="NCBI Taxonomy" id="10116"/>
    <lineage>
        <taxon>Eukaryota</taxon>
        <taxon>Metazoa</taxon>
        <taxon>Chordata</taxon>
        <taxon>Craniata</taxon>
        <taxon>Vertebrata</taxon>
        <taxon>Euteleostomi</taxon>
        <taxon>Mammalia</taxon>
        <taxon>Eutheria</taxon>
        <taxon>Euarchontoglires</taxon>
        <taxon>Glires</taxon>
        <taxon>Rodentia</taxon>
        <taxon>Myomorpha</taxon>
        <taxon>Muroidea</taxon>
        <taxon>Muridae</taxon>
        <taxon>Murinae</taxon>
        <taxon>Rattus</taxon>
    </lineage>
</organism>
<dbReference type="EMBL" id="M27883">
    <property type="protein sequence ID" value="AAA41976.1"/>
    <property type="status" value="ALT_SEQ"/>
    <property type="molecule type" value="mRNA"/>
</dbReference>
<dbReference type="EMBL" id="D11325">
    <property type="protein sequence ID" value="BAA01945.1"/>
    <property type="molecule type" value="Genomic_DNA"/>
</dbReference>
<dbReference type="PIR" id="B33292">
    <property type="entry name" value="TIRT2"/>
</dbReference>
<dbReference type="RefSeq" id="NP_690919.1">
    <property type="nucleotide sequence ID" value="NM_152936.1"/>
</dbReference>
<dbReference type="SMR" id="P09656"/>
<dbReference type="FunCoup" id="P09656">
    <property type="interactions" value="120"/>
</dbReference>
<dbReference type="IntAct" id="P09656">
    <property type="interactions" value="1"/>
</dbReference>
<dbReference type="STRING" id="10116.ENSRNOP00000017969"/>
<dbReference type="MEROPS" id="I01.047"/>
<dbReference type="PhosphoSitePlus" id="P09656"/>
<dbReference type="PaxDb" id="10116-ENSRNOP00000017969"/>
<dbReference type="GeneID" id="266602"/>
<dbReference type="KEGG" id="rno:266602"/>
<dbReference type="UCSC" id="RGD:708468">
    <property type="organism name" value="rat"/>
</dbReference>
<dbReference type="AGR" id="RGD:708468"/>
<dbReference type="CTD" id="266602"/>
<dbReference type="RGD" id="708468">
    <property type="gene designation" value="Spink1l"/>
</dbReference>
<dbReference type="eggNOG" id="KOG3649">
    <property type="taxonomic scope" value="Eukaryota"/>
</dbReference>
<dbReference type="HOGENOM" id="CLU_169765_2_1_1"/>
<dbReference type="InParanoid" id="P09656"/>
<dbReference type="OrthoDB" id="126772at2759"/>
<dbReference type="PhylomeDB" id="P09656"/>
<dbReference type="PRO" id="PR:P09656"/>
<dbReference type="Proteomes" id="UP000002494">
    <property type="component" value="Chromosome 18"/>
</dbReference>
<dbReference type="Bgee" id="ENSRNOG00000013410">
    <property type="expression patterns" value="Expressed in pancreas and 15 other cell types or tissues"/>
</dbReference>
<dbReference type="GO" id="GO:0005576">
    <property type="term" value="C:extracellular region"/>
    <property type="evidence" value="ECO:0007669"/>
    <property type="project" value="UniProtKB-SubCell"/>
</dbReference>
<dbReference type="GO" id="GO:0004867">
    <property type="term" value="F:serine-type endopeptidase inhibitor activity"/>
    <property type="evidence" value="ECO:0007669"/>
    <property type="project" value="UniProtKB-KW"/>
</dbReference>
<dbReference type="CDD" id="cd01327">
    <property type="entry name" value="KAZAL_PSTI"/>
    <property type="match status" value="1"/>
</dbReference>
<dbReference type="FunFam" id="3.30.60.30:FF:000031">
    <property type="entry name" value="Serine protease inhibitor Kazal-type 2"/>
    <property type="match status" value="1"/>
</dbReference>
<dbReference type="Gene3D" id="3.30.60.30">
    <property type="match status" value="1"/>
</dbReference>
<dbReference type="InterPro" id="IPR002350">
    <property type="entry name" value="Kazal_dom"/>
</dbReference>
<dbReference type="InterPro" id="IPR036058">
    <property type="entry name" value="Kazal_dom_sf"/>
</dbReference>
<dbReference type="InterPro" id="IPR001239">
    <property type="entry name" value="Prot_inh_Kazal-m"/>
</dbReference>
<dbReference type="PANTHER" id="PTHR21312">
    <property type="entry name" value="SERINE PROTEASE INHIBITOR"/>
    <property type="match status" value="1"/>
</dbReference>
<dbReference type="PANTHER" id="PTHR21312:SF27">
    <property type="entry name" value="SERINE PROTEASE INHIBITOR KAZAL-TYPE 1"/>
    <property type="match status" value="1"/>
</dbReference>
<dbReference type="Pfam" id="PF00050">
    <property type="entry name" value="Kazal_1"/>
    <property type="match status" value="1"/>
</dbReference>
<dbReference type="PRINTS" id="PR00290">
    <property type="entry name" value="KAZALINHBTR"/>
</dbReference>
<dbReference type="SMART" id="SM00280">
    <property type="entry name" value="KAZAL"/>
    <property type="match status" value="1"/>
</dbReference>
<dbReference type="SUPFAM" id="SSF100895">
    <property type="entry name" value="Kazal-type serine protease inhibitors"/>
    <property type="match status" value="1"/>
</dbReference>
<dbReference type="PROSITE" id="PS00282">
    <property type="entry name" value="KAZAL_1"/>
    <property type="match status" value="1"/>
</dbReference>
<dbReference type="PROSITE" id="PS51465">
    <property type="entry name" value="KAZAL_2"/>
    <property type="match status" value="1"/>
</dbReference>
<comment type="function">
    <text evidence="1 4 5">Serine protease inhibitor which exhibits anti-trypsin activity (PubMed:2110056, PubMed:3202973). In the pancreas, protects against trypsin-catalyzed premature activation of zymogens (By similarity).</text>
</comment>
<comment type="function">
    <text evidence="3">In the male reproductive tract, binds to sperm heads where it modulates sperm capacitance by inhibiting calcium uptake and nitrogen oxide (NO) production.</text>
</comment>
<comment type="subcellular location">
    <subcellularLocation>
        <location>Secreted</location>
    </subcellularLocation>
</comment>
<comment type="tissue specificity">
    <text evidence="3">Seminal vesicle.</text>
</comment>
<feature type="signal peptide" evidence="3 4 5">
    <location>
        <begin position="1"/>
        <end position="23"/>
    </location>
</feature>
<feature type="chain" id="PRO_0000016559" description="Serine protease inhibitor Kazal-type 1-like">
    <location>
        <begin position="24"/>
        <end position="79"/>
    </location>
</feature>
<feature type="domain" description="Kazal-like" evidence="2">
    <location>
        <begin position="26"/>
        <end position="79"/>
    </location>
</feature>
<feature type="site" description="Reactive bond for trypsin" evidence="1">
    <location>
        <begin position="41"/>
        <end position="42"/>
    </location>
</feature>
<feature type="site" description="Necessary for sperm binding" evidence="1">
    <location>
        <begin position="43"/>
        <end position="44"/>
    </location>
</feature>
<feature type="disulfide bond" evidence="2">
    <location>
        <begin position="32"/>
        <end position="61"/>
    </location>
</feature>
<feature type="disulfide bond" evidence="2">
    <location>
        <begin position="39"/>
        <end position="58"/>
    </location>
</feature>
<feature type="disulfide bond" evidence="2">
    <location>
        <begin position="47"/>
        <end position="79"/>
    </location>
</feature>
<gene>
    <name evidence="6" type="primary">Spink1l</name>
    <name evidence="6" type="synonym">Spink3</name>
</gene>